<reference key="1">
    <citation type="submission" date="1998-12" db="EMBL/GenBank/DDBJ databases">
        <title>HIS3 gene from Phaffia rhodozyma.</title>
        <authorList>
            <person name="Villadsen I.S."/>
            <person name="Langkjer R."/>
            <person name="Lavritsen J."/>
        </authorList>
    </citation>
    <scope>NUCLEOTIDE SEQUENCE [GENOMIC DNA]</scope>
    <source>
        <strain>ATCC 96594 / BCRC 22365 / CBS 6938 / JCM 9684 / VKM Y-2793</strain>
    </source>
</reference>
<dbReference type="EC" id="4.2.1.19"/>
<dbReference type="EMBL" id="AF114492">
    <property type="protein sequence ID" value="AAD14685.1"/>
    <property type="molecule type" value="Genomic_DNA"/>
</dbReference>
<dbReference type="SMR" id="O94153"/>
<dbReference type="UniPathway" id="UPA00031">
    <property type="reaction ID" value="UER00011"/>
</dbReference>
<dbReference type="GO" id="GO:0004424">
    <property type="term" value="F:imidazoleglycerol-phosphate dehydratase activity"/>
    <property type="evidence" value="ECO:0007669"/>
    <property type="project" value="UniProtKB-EC"/>
</dbReference>
<dbReference type="GO" id="GO:0000105">
    <property type="term" value="P:L-histidine biosynthetic process"/>
    <property type="evidence" value="ECO:0007669"/>
    <property type="project" value="UniProtKB-UniPathway"/>
</dbReference>
<dbReference type="CDD" id="cd07914">
    <property type="entry name" value="IGPD"/>
    <property type="match status" value="1"/>
</dbReference>
<dbReference type="FunFam" id="3.30.230.40:FF:000004">
    <property type="entry name" value="Imidazoleglycerol-phosphate dehydratase"/>
    <property type="match status" value="1"/>
</dbReference>
<dbReference type="FunFam" id="3.30.230.40:FF:000001">
    <property type="entry name" value="Imidazoleglycerol-phosphate dehydratase HisB"/>
    <property type="match status" value="1"/>
</dbReference>
<dbReference type="Gene3D" id="3.30.230.40">
    <property type="entry name" value="Imidazole glycerol phosphate dehydratase, domain 1"/>
    <property type="match status" value="2"/>
</dbReference>
<dbReference type="HAMAP" id="MF_00076">
    <property type="entry name" value="HisB"/>
    <property type="match status" value="1"/>
</dbReference>
<dbReference type="InterPro" id="IPR038494">
    <property type="entry name" value="IGPD_sf"/>
</dbReference>
<dbReference type="InterPro" id="IPR000807">
    <property type="entry name" value="ImidazoleglycerolP_deHydtase"/>
</dbReference>
<dbReference type="InterPro" id="IPR020565">
    <property type="entry name" value="ImidazoleglycerP_deHydtase_CS"/>
</dbReference>
<dbReference type="InterPro" id="IPR020568">
    <property type="entry name" value="Ribosomal_Su5_D2-typ_SF"/>
</dbReference>
<dbReference type="NCBIfam" id="NF002111">
    <property type="entry name" value="PRK00951.2-1"/>
    <property type="match status" value="1"/>
</dbReference>
<dbReference type="NCBIfam" id="NF002114">
    <property type="entry name" value="PRK00951.2-4"/>
    <property type="match status" value="1"/>
</dbReference>
<dbReference type="PANTHER" id="PTHR23133:SF2">
    <property type="entry name" value="IMIDAZOLEGLYCEROL-PHOSPHATE DEHYDRATASE"/>
    <property type="match status" value="1"/>
</dbReference>
<dbReference type="PANTHER" id="PTHR23133">
    <property type="entry name" value="IMIDAZOLEGLYCEROL-PHOSPHATE DEHYDRATASE HIS7"/>
    <property type="match status" value="1"/>
</dbReference>
<dbReference type="Pfam" id="PF00475">
    <property type="entry name" value="IGPD"/>
    <property type="match status" value="1"/>
</dbReference>
<dbReference type="SUPFAM" id="SSF54211">
    <property type="entry name" value="Ribosomal protein S5 domain 2-like"/>
    <property type="match status" value="2"/>
</dbReference>
<dbReference type="PROSITE" id="PS00954">
    <property type="entry name" value="IGP_DEHYDRATASE_1"/>
    <property type="match status" value="1"/>
</dbReference>
<dbReference type="PROSITE" id="PS00955">
    <property type="entry name" value="IGP_DEHYDRATASE_2"/>
    <property type="match status" value="1"/>
</dbReference>
<sequence>MSAGLPIRTATVTRNTNETQIVCSISLDHTPGVDQQIIDIQTGIGFLNHMLHAMAKHGNMSLTLHCKGDLEIDDHHTAEDCALALGEAFKLALGERRGIRRYGTGFAPLDEALSRAVLDISSRPYFCGDLPFTREKIGDLSTEMIPHVFESFATAAGVTLHVDCIRGVNNHHIAEASFKALALAIREAITRTGGNDVPSTKGVLL</sequence>
<accession>O94153</accession>
<comment type="catalytic activity">
    <reaction>
        <text>D-erythro-1-(imidazol-4-yl)glycerol 3-phosphate = 3-(imidazol-4-yl)-2-oxopropyl phosphate + H2O</text>
        <dbReference type="Rhea" id="RHEA:11040"/>
        <dbReference type="ChEBI" id="CHEBI:15377"/>
        <dbReference type="ChEBI" id="CHEBI:57766"/>
        <dbReference type="ChEBI" id="CHEBI:58278"/>
        <dbReference type="EC" id="4.2.1.19"/>
    </reaction>
</comment>
<comment type="pathway">
    <text>Amino-acid biosynthesis; L-histidine biosynthesis; L-histidine from 5-phospho-alpha-D-ribose 1-diphosphate: step 6/9.</text>
</comment>
<comment type="similarity">
    <text evidence="1">Belongs to the imidazoleglycerol-phosphate dehydratase family.</text>
</comment>
<keyword id="KW-0028">Amino-acid biosynthesis</keyword>
<keyword id="KW-0368">Histidine biosynthesis</keyword>
<keyword id="KW-0456">Lyase</keyword>
<proteinExistence type="inferred from homology"/>
<protein>
    <recommendedName>
        <fullName>Imidazoleglycerol-phosphate dehydratase</fullName>
        <shortName>IGPD</shortName>
        <ecNumber>4.2.1.19</ecNumber>
    </recommendedName>
</protein>
<evidence type="ECO:0000305" key="1"/>
<gene>
    <name type="primary">HIS3</name>
</gene>
<feature type="chain" id="PRO_0000158241" description="Imidazoleglycerol-phosphate dehydratase">
    <location>
        <begin position="1"/>
        <end position="205"/>
    </location>
</feature>
<organism>
    <name type="scientific">Phaffia rhodozyma</name>
    <name type="common">Yeast</name>
    <name type="synonym">Xanthophyllomyces dendrorhous</name>
    <dbReference type="NCBI Taxonomy" id="264483"/>
    <lineage>
        <taxon>Eukaryota</taxon>
        <taxon>Fungi</taxon>
        <taxon>Dikarya</taxon>
        <taxon>Basidiomycota</taxon>
        <taxon>Agaricomycotina</taxon>
        <taxon>Tremellomycetes</taxon>
        <taxon>Cystofilobasidiales</taxon>
        <taxon>Mrakiaceae</taxon>
        <taxon>Phaffia</taxon>
    </lineage>
</organism>
<name>HIS7_PHARH</name>